<keyword id="KW-0963">Cytoplasm</keyword>
<keyword id="KW-0255">Endonuclease</keyword>
<keyword id="KW-0269">Exonuclease</keyword>
<keyword id="KW-0378">Hydrolase</keyword>
<keyword id="KW-0479">Metal-binding</keyword>
<keyword id="KW-0540">Nuclease</keyword>
<keyword id="KW-0694">RNA-binding</keyword>
<keyword id="KW-0698">rRNA processing</keyword>
<keyword id="KW-0862">Zinc</keyword>
<dbReference type="EC" id="3.1.-.-" evidence="2"/>
<dbReference type="EMBL" id="CP000046">
    <property type="protein sequence ID" value="AAW37978.1"/>
    <property type="molecule type" value="Genomic_DNA"/>
</dbReference>
<dbReference type="SMR" id="Q5HGZ5"/>
<dbReference type="KEGG" id="sac:SACOL1098"/>
<dbReference type="HOGENOM" id="CLU_008727_3_1_9"/>
<dbReference type="Proteomes" id="UP000000530">
    <property type="component" value="Chromosome"/>
</dbReference>
<dbReference type="GO" id="GO:0005737">
    <property type="term" value="C:cytoplasm"/>
    <property type="evidence" value="ECO:0007669"/>
    <property type="project" value="UniProtKB-SubCell"/>
</dbReference>
<dbReference type="GO" id="GO:0004534">
    <property type="term" value="F:5'-3' RNA exonuclease activity"/>
    <property type="evidence" value="ECO:0007669"/>
    <property type="project" value="UniProtKB-UniRule"/>
</dbReference>
<dbReference type="GO" id="GO:0003723">
    <property type="term" value="F:RNA binding"/>
    <property type="evidence" value="ECO:0007669"/>
    <property type="project" value="UniProtKB-UniRule"/>
</dbReference>
<dbReference type="GO" id="GO:0004521">
    <property type="term" value="F:RNA endonuclease activity"/>
    <property type="evidence" value="ECO:0007669"/>
    <property type="project" value="UniProtKB-UniRule"/>
</dbReference>
<dbReference type="GO" id="GO:0008270">
    <property type="term" value="F:zinc ion binding"/>
    <property type="evidence" value="ECO:0007669"/>
    <property type="project" value="InterPro"/>
</dbReference>
<dbReference type="GO" id="GO:0006364">
    <property type="term" value="P:rRNA processing"/>
    <property type="evidence" value="ECO:0007669"/>
    <property type="project" value="UniProtKB-UniRule"/>
</dbReference>
<dbReference type="CDD" id="cd07714">
    <property type="entry name" value="RNaseJ_MBL-fold"/>
    <property type="match status" value="1"/>
</dbReference>
<dbReference type="FunFam" id="3.10.20.580:FF:000001">
    <property type="entry name" value="Ribonuclease J"/>
    <property type="match status" value="1"/>
</dbReference>
<dbReference type="Gene3D" id="3.10.20.580">
    <property type="match status" value="1"/>
</dbReference>
<dbReference type="Gene3D" id="3.40.50.10710">
    <property type="entry name" value="Metallo-hydrolase/oxidoreductase"/>
    <property type="match status" value="1"/>
</dbReference>
<dbReference type="Gene3D" id="3.60.15.10">
    <property type="entry name" value="Ribonuclease Z/Hydroxyacylglutathione hydrolase-like"/>
    <property type="match status" value="1"/>
</dbReference>
<dbReference type="HAMAP" id="MF_01491">
    <property type="entry name" value="RNase_J_bact"/>
    <property type="match status" value="1"/>
</dbReference>
<dbReference type="InterPro" id="IPR001279">
    <property type="entry name" value="Metallo-B-lactamas"/>
</dbReference>
<dbReference type="InterPro" id="IPR036866">
    <property type="entry name" value="RibonucZ/Hydroxyglut_hydro"/>
</dbReference>
<dbReference type="InterPro" id="IPR011108">
    <property type="entry name" value="RMMBL"/>
</dbReference>
<dbReference type="InterPro" id="IPR004613">
    <property type="entry name" value="RNase_J"/>
</dbReference>
<dbReference type="InterPro" id="IPR042173">
    <property type="entry name" value="RNase_J_2"/>
</dbReference>
<dbReference type="InterPro" id="IPR055132">
    <property type="entry name" value="RNase_J_b_CASP"/>
</dbReference>
<dbReference type="InterPro" id="IPR030854">
    <property type="entry name" value="RNase_J_bac"/>
</dbReference>
<dbReference type="InterPro" id="IPR041636">
    <property type="entry name" value="RNase_J_C"/>
</dbReference>
<dbReference type="InterPro" id="IPR001587">
    <property type="entry name" value="RNase_J_CS"/>
</dbReference>
<dbReference type="NCBIfam" id="TIGR00649">
    <property type="entry name" value="MG423"/>
    <property type="match status" value="1"/>
</dbReference>
<dbReference type="NCBIfam" id="NF047419">
    <property type="entry name" value="RNase_J1_RnjA"/>
    <property type="match status" value="1"/>
</dbReference>
<dbReference type="PANTHER" id="PTHR43694">
    <property type="entry name" value="RIBONUCLEASE J"/>
    <property type="match status" value="1"/>
</dbReference>
<dbReference type="PANTHER" id="PTHR43694:SF1">
    <property type="entry name" value="RIBONUCLEASE J"/>
    <property type="match status" value="1"/>
</dbReference>
<dbReference type="Pfam" id="PF00753">
    <property type="entry name" value="Lactamase_B"/>
    <property type="match status" value="1"/>
</dbReference>
<dbReference type="Pfam" id="PF07521">
    <property type="entry name" value="RMMBL"/>
    <property type="match status" value="1"/>
</dbReference>
<dbReference type="Pfam" id="PF22505">
    <property type="entry name" value="RNase_J_b_CASP"/>
    <property type="match status" value="1"/>
</dbReference>
<dbReference type="Pfam" id="PF17770">
    <property type="entry name" value="RNase_J_C"/>
    <property type="match status" value="1"/>
</dbReference>
<dbReference type="PIRSF" id="PIRSF004803">
    <property type="entry name" value="RnjA"/>
    <property type="match status" value="1"/>
</dbReference>
<dbReference type="SMART" id="SM00849">
    <property type="entry name" value="Lactamase_B"/>
    <property type="match status" value="1"/>
</dbReference>
<dbReference type="SUPFAM" id="SSF56281">
    <property type="entry name" value="Metallo-hydrolase/oxidoreductase"/>
    <property type="match status" value="1"/>
</dbReference>
<dbReference type="PROSITE" id="PS01292">
    <property type="entry name" value="UPF0036"/>
    <property type="match status" value="1"/>
</dbReference>
<evidence type="ECO:0000250" key="1"/>
<evidence type="ECO:0000255" key="2">
    <source>
        <dbReference type="HAMAP-Rule" id="MF_01491"/>
    </source>
</evidence>
<reference key="1">
    <citation type="journal article" date="2005" name="J. Bacteriol.">
        <title>Insights on evolution of virulence and resistance from the complete genome analysis of an early methicillin-resistant Staphylococcus aureus strain and a biofilm-producing methicillin-resistant Staphylococcus epidermidis strain.</title>
        <authorList>
            <person name="Gill S.R."/>
            <person name="Fouts D.E."/>
            <person name="Archer G.L."/>
            <person name="Mongodin E.F."/>
            <person name="DeBoy R.T."/>
            <person name="Ravel J."/>
            <person name="Paulsen I.T."/>
            <person name="Kolonay J.F."/>
            <person name="Brinkac L.M."/>
            <person name="Beanan M.J."/>
            <person name="Dodson R.J."/>
            <person name="Daugherty S.C."/>
            <person name="Madupu R."/>
            <person name="Angiuoli S.V."/>
            <person name="Durkin A.S."/>
            <person name="Haft D.H."/>
            <person name="Vamathevan J.J."/>
            <person name="Khouri H."/>
            <person name="Utterback T.R."/>
            <person name="Lee C."/>
            <person name="Dimitrov G."/>
            <person name="Jiang L."/>
            <person name="Qin H."/>
            <person name="Weidman J."/>
            <person name="Tran K."/>
            <person name="Kang K.H."/>
            <person name="Hance I.R."/>
            <person name="Nelson K.E."/>
            <person name="Fraser C.M."/>
        </authorList>
    </citation>
    <scope>NUCLEOTIDE SEQUENCE [LARGE SCALE GENOMIC DNA]</scope>
    <source>
        <strain>COL</strain>
    </source>
</reference>
<gene>
    <name evidence="2" type="primary">rnj1</name>
    <name type="ordered locus">SACOL1098</name>
</gene>
<sequence length="565" mass="62669">MKQLHPNEVGVYALGGLGEIGKNTYAVEYKDEIVIIDAGIKFPDDNLLGIDYVIPDYTYLVQNQDKIVGLFITHGHEDHIGGVPFLLKQLNIPIYGGPLALGLIRNKLEEHHLLRTAKLNEINEDSVIKSKHFTISFYLTTHSIPETYGVIVDTPEGKVVHTGDFKFDFTPVGKPANIAKMAQLGEEGVLCLLSDSTNSLVPDFTLSEREVGQNVDKIFRNCKGRIIFATFASNIYRVQQAVEAAIKNNRKIVTFGRSMENNIKIGMELGYIKAPPETFIEPNKINTVPKHELLILCTGSQGEPMAALSRIANGTHKQIKIIPEDTVVFSSSPIPGNTKSINRTINSLYKAGADVIHSKISNIHTSGHGSQGDQQLMLRLIKPKYFLPIHGEYRMLKAHGETGVECGVEEDNVFIFDIGDVLALTHDSARKAGRIPSGNVLVDGSGIGDIGNVVIRDRKLLSEEGLVIVVVSIDFNTNKLLSGPDIISRGFVYMRESGQLIYDAQRKIKTDVISKLNQNKDIQWHQIKSSIIETLQPYLFEKTARKPMILPVIMKVNEQKESNNK</sequence>
<name>RNJ1_STAAC</name>
<proteinExistence type="inferred from homology"/>
<feature type="chain" id="PRO_0000286840" description="Ribonuclease J 1">
    <location>
        <begin position="1"/>
        <end position="565"/>
    </location>
</feature>
<feature type="binding site" evidence="2">
    <location>
        <position position="74"/>
    </location>
    <ligand>
        <name>Zn(2+)</name>
        <dbReference type="ChEBI" id="CHEBI:29105"/>
        <label>1</label>
        <note>catalytic</note>
    </ligand>
</feature>
<feature type="binding site" evidence="2">
    <location>
        <position position="76"/>
    </location>
    <ligand>
        <name>Zn(2+)</name>
        <dbReference type="ChEBI" id="CHEBI:29105"/>
        <label>1</label>
        <note>catalytic</note>
    </ligand>
</feature>
<feature type="binding site" evidence="2">
    <location>
        <position position="78"/>
    </location>
    <ligand>
        <name>Zn(2+)</name>
        <dbReference type="ChEBI" id="CHEBI:29105"/>
        <label>2</label>
        <note>catalytic</note>
    </ligand>
</feature>
<feature type="binding site" evidence="2">
    <location>
        <position position="79"/>
    </location>
    <ligand>
        <name>Zn(2+)</name>
        <dbReference type="ChEBI" id="CHEBI:29105"/>
        <label>2</label>
        <note>catalytic</note>
    </ligand>
</feature>
<feature type="binding site" evidence="2">
    <location>
        <position position="142"/>
    </location>
    <ligand>
        <name>Zn(2+)</name>
        <dbReference type="ChEBI" id="CHEBI:29105"/>
        <label>1</label>
        <note>catalytic</note>
    </ligand>
</feature>
<feature type="binding site" evidence="2">
    <location>
        <position position="164"/>
    </location>
    <ligand>
        <name>Zn(2+)</name>
        <dbReference type="ChEBI" id="CHEBI:29105"/>
        <label>1</label>
        <note>catalytic</note>
    </ligand>
</feature>
<feature type="binding site" evidence="2">
    <location>
        <position position="164"/>
    </location>
    <ligand>
        <name>Zn(2+)</name>
        <dbReference type="ChEBI" id="CHEBI:29105"/>
        <label>2</label>
        <note>catalytic</note>
    </ligand>
</feature>
<feature type="binding site" evidence="2">
    <location>
        <begin position="364"/>
        <end position="368"/>
    </location>
    <ligand>
        <name>substrate</name>
    </ligand>
</feature>
<feature type="binding site" evidence="2">
    <location>
        <position position="390"/>
    </location>
    <ligand>
        <name>Zn(2+)</name>
        <dbReference type="ChEBI" id="CHEBI:29105"/>
        <label>2</label>
        <note>catalytic</note>
    </ligand>
</feature>
<organism>
    <name type="scientific">Staphylococcus aureus (strain COL)</name>
    <dbReference type="NCBI Taxonomy" id="93062"/>
    <lineage>
        <taxon>Bacteria</taxon>
        <taxon>Bacillati</taxon>
        <taxon>Bacillota</taxon>
        <taxon>Bacilli</taxon>
        <taxon>Bacillales</taxon>
        <taxon>Staphylococcaceae</taxon>
        <taxon>Staphylococcus</taxon>
    </lineage>
</organism>
<comment type="function">
    <text evidence="1">An RNase that has 5'-3' exonuclease and possibly endoonuclease activity. Involved in maturation of rRNA and in some organisms also mRNA maturation and/or decay (By similarity).</text>
</comment>
<comment type="cofactor">
    <cofactor evidence="2">
        <name>Zn(2+)</name>
        <dbReference type="ChEBI" id="CHEBI:29105"/>
    </cofactor>
    <text evidence="2">Binds up to 2 Zn(2+) ions per subunit. It is not clear if Zn(2+) or Mg(2+) is physiologically important.</text>
</comment>
<comment type="subunit">
    <text evidence="2">Homodimer, may be a subunit of the RNA degradosome.</text>
</comment>
<comment type="subcellular location">
    <subcellularLocation>
        <location evidence="2">Cytoplasm</location>
    </subcellularLocation>
</comment>
<comment type="similarity">
    <text evidence="2">Belongs to the metallo-beta-lactamase superfamily. RNA-metabolizing metallo-beta-lactamase-like family. Bacterial RNase J subfamily.</text>
</comment>
<accession>Q5HGZ5</accession>
<protein>
    <recommendedName>
        <fullName evidence="2">Ribonuclease J 1</fullName>
        <shortName evidence="2">RNase J1</shortName>
        <ecNumber evidence="2">3.1.-.-</ecNumber>
    </recommendedName>
</protein>